<geneLocation type="plastid"/>
<dbReference type="EMBL" id="AM711640">
    <property type="protein sequence ID" value="CAM98425.1"/>
    <property type="molecule type" value="Genomic_DNA"/>
</dbReference>
<dbReference type="RefSeq" id="YP_001430138.1">
    <property type="nucleotide sequence ID" value="NC_009766.1"/>
</dbReference>
<dbReference type="SMR" id="A7M997"/>
<dbReference type="GeneID" id="5536597"/>
<dbReference type="GO" id="GO:0009536">
    <property type="term" value="C:plastid"/>
    <property type="evidence" value="ECO:0007669"/>
    <property type="project" value="UniProtKB-SubCell"/>
</dbReference>
<dbReference type="GO" id="GO:1990904">
    <property type="term" value="C:ribonucleoprotein complex"/>
    <property type="evidence" value="ECO:0007669"/>
    <property type="project" value="UniProtKB-KW"/>
</dbReference>
<dbReference type="GO" id="GO:0005840">
    <property type="term" value="C:ribosome"/>
    <property type="evidence" value="ECO:0007669"/>
    <property type="project" value="UniProtKB-KW"/>
</dbReference>
<dbReference type="GO" id="GO:0003735">
    <property type="term" value="F:structural constituent of ribosome"/>
    <property type="evidence" value="ECO:0007669"/>
    <property type="project" value="InterPro"/>
</dbReference>
<dbReference type="GO" id="GO:0006412">
    <property type="term" value="P:translation"/>
    <property type="evidence" value="ECO:0007669"/>
    <property type="project" value="InterPro"/>
</dbReference>
<dbReference type="HAMAP" id="MF_00251">
    <property type="entry name" value="Ribosomal_bL36"/>
    <property type="match status" value="1"/>
</dbReference>
<dbReference type="InterPro" id="IPR000473">
    <property type="entry name" value="Ribosomal_bL36"/>
</dbReference>
<dbReference type="InterPro" id="IPR035977">
    <property type="entry name" value="Ribosomal_bL36_sp"/>
</dbReference>
<dbReference type="NCBIfam" id="TIGR01022">
    <property type="entry name" value="rpmJ_bact"/>
    <property type="match status" value="1"/>
</dbReference>
<dbReference type="PANTHER" id="PTHR42888">
    <property type="entry name" value="50S RIBOSOMAL PROTEIN L36, CHLOROPLASTIC"/>
    <property type="match status" value="1"/>
</dbReference>
<dbReference type="PANTHER" id="PTHR42888:SF1">
    <property type="entry name" value="LARGE RIBOSOMAL SUBUNIT PROTEIN BL36C"/>
    <property type="match status" value="1"/>
</dbReference>
<dbReference type="Pfam" id="PF00444">
    <property type="entry name" value="Ribosomal_L36"/>
    <property type="match status" value="1"/>
</dbReference>
<dbReference type="SUPFAM" id="SSF57840">
    <property type="entry name" value="Ribosomal protein L36"/>
    <property type="match status" value="1"/>
</dbReference>
<dbReference type="PROSITE" id="PS00828">
    <property type="entry name" value="RIBOSOMAL_L36"/>
    <property type="match status" value="1"/>
</dbReference>
<sequence>MKIRASVRQICDKCRLIRRRGRIRVICYNPRHKQRQG</sequence>
<protein>
    <recommendedName>
        <fullName evidence="2">Large ribosomal subunit protein bL36c</fullName>
    </recommendedName>
    <alternativeName>
        <fullName>Plastid 50S ribosomal protein L36</fullName>
    </alternativeName>
</protein>
<proteinExistence type="inferred from homology"/>
<organism>
    <name type="scientific">Cuscuta reflexa</name>
    <name type="common">Southern Asian dodder</name>
    <dbReference type="NCBI Taxonomy" id="4129"/>
    <lineage>
        <taxon>Eukaryota</taxon>
        <taxon>Viridiplantae</taxon>
        <taxon>Streptophyta</taxon>
        <taxon>Embryophyta</taxon>
        <taxon>Tracheophyta</taxon>
        <taxon>Spermatophyta</taxon>
        <taxon>Magnoliopsida</taxon>
        <taxon>eudicotyledons</taxon>
        <taxon>Gunneridae</taxon>
        <taxon>Pentapetalae</taxon>
        <taxon>asterids</taxon>
        <taxon>lamiids</taxon>
        <taxon>Solanales</taxon>
        <taxon>Convolvulaceae</taxon>
        <taxon>Cuscuteae</taxon>
        <taxon>Cuscuta</taxon>
        <taxon>Cuscuta subgen. Monogynella</taxon>
    </lineage>
</organism>
<reference key="1">
    <citation type="journal article" date="2007" name="BMC Plant Biol.">
        <title>Complete DNA sequences of the plastid genomes of two parasitic flowering plant species, Cuscuta reflexa and Cuscuta gronovii.</title>
        <authorList>
            <person name="Funk H.T."/>
            <person name="Berg S."/>
            <person name="Krupinska K."/>
            <person name="Maier U.-G."/>
            <person name="Krause K."/>
        </authorList>
    </citation>
    <scope>NUCLEOTIDE SEQUENCE [LARGE SCALE GENOMIC DNA]</scope>
</reference>
<accession>A7M997</accession>
<feature type="chain" id="PRO_0000344756" description="Large ribosomal subunit protein bL36c">
    <location>
        <begin position="1"/>
        <end position="37"/>
    </location>
</feature>
<name>RK36_CUSRE</name>
<keyword id="KW-0934">Plastid</keyword>
<keyword id="KW-0687">Ribonucleoprotein</keyword>
<keyword id="KW-0689">Ribosomal protein</keyword>
<gene>
    <name evidence="1" type="primary">rpl36</name>
</gene>
<comment type="subcellular location">
    <subcellularLocation>
        <location>Plastid</location>
    </subcellularLocation>
</comment>
<comment type="similarity">
    <text evidence="1">Belongs to the bacterial ribosomal protein bL36 family.</text>
</comment>
<evidence type="ECO:0000255" key="1">
    <source>
        <dbReference type="HAMAP-Rule" id="MF_00251"/>
    </source>
</evidence>
<evidence type="ECO:0000305" key="2"/>